<comment type="function">
    <text evidence="1">Catalyzes the reversible isomerization of glucose-6-phosphate to fructose-6-phosphate.</text>
</comment>
<comment type="catalytic activity">
    <reaction evidence="1">
        <text>alpha-D-glucose 6-phosphate = beta-D-fructose 6-phosphate</text>
        <dbReference type="Rhea" id="RHEA:11816"/>
        <dbReference type="ChEBI" id="CHEBI:57634"/>
        <dbReference type="ChEBI" id="CHEBI:58225"/>
        <dbReference type="EC" id="5.3.1.9"/>
    </reaction>
</comment>
<comment type="pathway">
    <text evidence="1">Carbohydrate biosynthesis; gluconeogenesis.</text>
</comment>
<comment type="pathway">
    <text evidence="1">Carbohydrate degradation; glycolysis; D-glyceraldehyde 3-phosphate and glycerone phosphate from D-glucose: step 2/4.</text>
</comment>
<comment type="subcellular location">
    <subcellularLocation>
        <location evidence="1">Cytoplasm</location>
    </subcellularLocation>
</comment>
<comment type="similarity">
    <text evidence="1">Belongs to the GPI family.</text>
</comment>
<evidence type="ECO:0000255" key="1">
    <source>
        <dbReference type="HAMAP-Rule" id="MF_00473"/>
    </source>
</evidence>
<reference key="1">
    <citation type="journal article" date="2005" name="Proc. Natl. Acad. Sci. U.S.A.">
        <title>Comparison of the complete genome sequences of Pseudomonas syringae pv. syringae B728a and pv. tomato DC3000.</title>
        <authorList>
            <person name="Feil H."/>
            <person name="Feil W.S."/>
            <person name="Chain P."/>
            <person name="Larimer F."/>
            <person name="Dibartolo G."/>
            <person name="Copeland A."/>
            <person name="Lykidis A."/>
            <person name="Trong S."/>
            <person name="Nolan M."/>
            <person name="Goltsman E."/>
            <person name="Thiel J."/>
            <person name="Malfatti S."/>
            <person name="Loper J.E."/>
            <person name="Lapidus A."/>
            <person name="Detter J.C."/>
            <person name="Land M."/>
            <person name="Richardson P.M."/>
            <person name="Kyrpides N.C."/>
            <person name="Ivanova N."/>
            <person name="Lindow S.E."/>
        </authorList>
    </citation>
    <scope>NUCLEOTIDE SEQUENCE [LARGE SCALE GENOMIC DNA]</scope>
    <source>
        <strain>B728a</strain>
    </source>
</reference>
<proteinExistence type="inferred from homology"/>
<protein>
    <recommendedName>
        <fullName evidence="1">Glucose-6-phosphate isomerase</fullName>
        <shortName evidence="1">GPI</shortName>
        <ecNumber evidence="1">5.3.1.9</ecNumber>
    </recommendedName>
    <alternativeName>
        <fullName evidence="1">Phosphoglucose isomerase</fullName>
        <shortName evidence="1">PGI</shortName>
    </alternativeName>
    <alternativeName>
        <fullName evidence="1">Phosphohexose isomerase</fullName>
        <shortName evidence="1">PHI</shortName>
    </alternativeName>
</protein>
<accession>Q4ZY88</accession>
<keyword id="KW-0963">Cytoplasm</keyword>
<keyword id="KW-0312">Gluconeogenesis</keyword>
<keyword id="KW-0324">Glycolysis</keyword>
<keyword id="KW-0413">Isomerase</keyword>
<organism>
    <name type="scientific">Pseudomonas syringae pv. syringae (strain B728a)</name>
    <dbReference type="NCBI Taxonomy" id="205918"/>
    <lineage>
        <taxon>Bacteria</taxon>
        <taxon>Pseudomonadati</taxon>
        <taxon>Pseudomonadota</taxon>
        <taxon>Gammaproteobacteria</taxon>
        <taxon>Pseudomonadales</taxon>
        <taxon>Pseudomonadaceae</taxon>
        <taxon>Pseudomonas</taxon>
        <taxon>Pseudomonas syringae</taxon>
    </lineage>
</organism>
<name>G6PI_PSEU2</name>
<dbReference type="EC" id="5.3.1.9" evidence="1"/>
<dbReference type="EMBL" id="CP000075">
    <property type="protein sequence ID" value="AAY35884.1"/>
    <property type="molecule type" value="Genomic_DNA"/>
</dbReference>
<dbReference type="RefSeq" id="WP_011266656.1">
    <property type="nucleotide sequence ID" value="NC_007005.1"/>
</dbReference>
<dbReference type="RefSeq" id="YP_233922.1">
    <property type="nucleotide sequence ID" value="NC_007005.1"/>
</dbReference>
<dbReference type="SMR" id="Q4ZY88"/>
<dbReference type="STRING" id="205918.Psyr_0826"/>
<dbReference type="KEGG" id="psb:Psyr_0826"/>
<dbReference type="PATRIC" id="fig|205918.7.peg.851"/>
<dbReference type="eggNOG" id="COG0166">
    <property type="taxonomic scope" value="Bacteria"/>
</dbReference>
<dbReference type="HOGENOM" id="CLU_017947_3_1_6"/>
<dbReference type="OrthoDB" id="140919at2"/>
<dbReference type="UniPathway" id="UPA00109">
    <property type="reaction ID" value="UER00181"/>
</dbReference>
<dbReference type="UniPathway" id="UPA00138"/>
<dbReference type="Proteomes" id="UP000000426">
    <property type="component" value="Chromosome"/>
</dbReference>
<dbReference type="GO" id="GO:0005829">
    <property type="term" value="C:cytosol"/>
    <property type="evidence" value="ECO:0007669"/>
    <property type="project" value="TreeGrafter"/>
</dbReference>
<dbReference type="GO" id="GO:0097367">
    <property type="term" value="F:carbohydrate derivative binding"/>
    <property type="evidence" value="ECO:0007669"/>
    <property type="project" value="InterPro"/>
</dbReference>
<dbReference type="GO" id="GO:0004347">
    <property type="term" value="F:glucose-6-phosphate isomerase activity"/>
    <property type="evidence" value="ECO:0007669"/>
    <property type="project" value="UniProtKB-UniRule"/>
</dbReference>
<dbReference type="GO" id="GO:0048029">
    <property type="term" value="F:monosaccharide binding"/>
    <property type="evidence" value="ECO:0007669"/>
    <property type="project" value="TreeGrafter"/>
</dbReference>
<dbReference type="GO" id="GO:0006094">
    <property type="term" value="P:gluconeogenesis"/>
    <property type="evidence" value="ECO:0007669"/>
    <property type="project" value="UniProtKB-UniRule"/>
</dbReference>
<dbReference type="GO" id="GO:0051156">
    <property type="term" value="P:glucose 6-phosphate metabolic process"/>
    <property type="evidence" value="ECO:0007669"/>
    <property type="project" value="TreeGrafter"/>
</dbReference>
<dbReference type="GO" id="GO:0006096">
    <property type="term" value="P:glycolytic process"/>
    <property type="evidence" value="ECO:0007669"/>
    <property type="project" value="UniProtKB-UniRule"/>
</dbReference>
<dbReference type="CDD" id="cd05015">
    <property type="entry name" value="SIS_PGI_1"/>
    <property type="match status" value="1"/>
</dbReference>
<dbReference type="CDD" id="cd05016">
    <property type="entry name" value="SIS_PGI_2"/>
    <property type="match status" value="1"/>
</dbReference>
<dbReference type="FunFam" id="3.40.50.10490:FF:000018">
    <property type="entry name" value="Glucose-6-phosphate isomerase"/>
    <property type="match status" value="1"/>
</dbReference>
<dbReference type="Gene3D" id="1.10.1390.10">
    <property type="match status" value="1"/>
</dbReference>
<dbReference type="Gene3D" id="3.40.50.10490">
    <property type="entry name" value="Glucose-6-phosphate isomerase like protein, domain 1"/>
    <property type="match status" value="2"/>
</dbReference>
<dbReference type="HAMAP" id="MF_00473">
    <property type="entry name" value="G6P_isomerase"/>
    <property type="match status" value="1"/>
</dbReference>
<dbReference type="InterPro" id="IPR001672">
    <property type="entry name" value="G6P_Isomerase"/>
</dbReference>
<dbReference type="InterPro" id="IPR023096">
    <property type="entry name" value="G6P_Isomerase_C"/>
</dbReference>
<dbReference type="InterPro" id="IPR018189">
    <property type="entry name" value="Phosphoglucose_isomerase_CS"/>
</dbReference>
<dbReference type="InterPro" id="IPR046348">
    <property type="entry name" value="SIS_dom_sf"/>
</dbReference>
<dbReference type="InterPro" id="IPR035476">
    <property type="entry name" value="SIS_PGI_1"/>
</dbReference>
<dbReference type="InterPro" id="IPR035482">
    <property type="entry name" value="SIS_PGI_2"/>
</dbReference>
<dbReference type="NCBIfam" id="NF001211">
    <property type="entry name" value="PRK00179.1"/>
    <property type="match status" value="1"/>
</dbReference>
<dbReference type="PANTHER" id="PTHR11469">
    <property type="entry name" value="GLUCOSE-6-PHOSPHATE ISOMERASE"/>
    <property type="match status" value="1"/>
</dbReference>
<dbReference type="PANTHER" id="PTHR11469:SF1">
    <property type="entry name" value="GLUCOSE-6-PHOSPHATE ISOMERASE"/>
    <property type="match status" value="1"/>
</dbReference>
<dbReference type="Pfam" id="PF00342">
    <property type="entry name" value="PGI"/>
    <property type="match status" value="1"/>
</dbReference>
<dbReference type="PRINTS" id="PR00662">
    <property type="entry name" value="G6PISOMERASE"/>
</dbReference>
<dbReference type="SUPFAM" id="SSF53697">
    <property type="entry name" value="SIS domain"/>
    <property type="match status" value="1"/>
</dbReference>
<dbReference type="PROSITE" id="PS00765">
    <property type="entry name" value="P_GLUCOSE_ISOMERASE_1"/>
    <property type="match status" value="1"/>
</dbReference>
<dbReference type="PROSITE" id="PS00174">
    <property type="entry name" value="P_GLUCOSE_ISOMERASE_2"/>
    <property type="match status" value="1"/>
</dbReference>
<dbReference type="PROSITE" id="PS51463">
    <property type="entry name" value="P_GLUCOSE_ISOMERASE_3"/>
    <property type="match status" value="1"/>
</dbReference>
<sequence>MAYYRTPSDVTALPAWQALNKHRQAMQNFSMREAFNTDPQRFSQFTLSSAGLFLDYSKNLITTETRDLLVSLAGEVGLKDAIKAQYDGELVNSSEGRPALHTALRRPVGDKLKVNGVDVMPDVHRVLNQMTELVGRIHDGLWRGYTEKPITDVVNIGIGGSFLGPELVSEALVAYAHKGVRCHYLANIDGSEFHELSMKIRAETTLFIVSSKSFNTLETLKNAQAARAWYLAQGGSEVELHRHFIAVSSNNAAAVAFGIREENIFPMWDWVGGRYSLWSAIGLPIALAIGMSNFKELLSGAYTMDQHFQSAPFEQNMPVLLGLLGVWYGNFWNAQSHAILPYDHYLRNITKHLQQLDMESNGKSVRQDGTPTSTDTGPVIWGGVGANGQHAYHQLLHQGTQMIPADFIVPIVSFNPVADHHQWLYANCLSQSQALMMGKTRAEAEAELREKGMDEQEVQKLAPHKVIPGNRPSNTLVVERISPRRLGALVAMYEHKVFVQSVIWGTNAFDQWGVELGKEMGKAVYQRLTGGTEEQADDASTQGLINYFRGRHRG</sequence>
<feature type="chain" id="PRO_0000180714" description="Glucose-6-phosphate isomerase">
    <location>
        <begin position="1"/>
        <end position="554"/>
    </location>
</feature>
<feature type="active site" description="Proton donor" evidence="1">
    <location>
        <position position="359"/>
    </location>
</feature>
<feature type="active site" evidence="1">
    <location>
        <position position="390"/>
    </location>
</feature>
<feature type="active site" evidence="1">
    <location>
        <position position="518"/>
    </location>
</feature>
<gene>
    <name evidence="1" type="primary">pgi</name>
    <name type="ordered locus">Psyr_0826</name>
</gene>